<dbReference type="EMBL" id="BA000043">
    <property type="protein sequence ID" value="BAD76981.1"/>
    <property type="molecule type" value="Genomic_DNA"/>
</dbReference>
<dbReference type="SMR" id="Q5KWF5"/>
<dbReference type="STRING" id="235909.GK2696"/>
<dbReference type="KEGG" id="gka:GK2696"/>
<dbReference type="eggNOG" id="COG3027">
    <property type="taxonomic scope" value="Bacteria"/>
</dbReference>
<dbReference type="HOGENOM" id="CLU_116623_4_0_9"/>
<dbReference type="Proteomes" id="UP000001172">
    <property type="component" value="Chromosome"/>
</dbReference>
<dbReference type="GO" id="GO:0032153">
    <property type="term" value="C:cell division site"/>
    <property type="evidence" value="ECO:0007669"/>
    <property type="project" value="TreeGrafter"/>
</dbReference>
<dbReference type="GO" id="GO:0030428">
    <property type="term" value="C:cell septum"/>
    <property type="evidence" value="ECO:0007669"/>
    <property type="project" value="TreeGrafter"/>
</dbReference>
<dbReference type="GO" id="GO:0005829">
    <property type="term" value="C:cytosol"/>
    <property type="evidence" value="ECO:0007669"/>
    <property type="project" value="TreeGrafter"/>
</dbReference>
<dbReference type="GO" id="GO:0005886">
    <property type="term" value="C:plasma membrane"/>
    <property type="evidence" value="ECO:0007669"/>
    <property type="project" value="UniProtKB-UniRule"/>
</dbReference>
<dbReference type="GO" id="GO:0000917">
    <property type="term" value="P:division septum assembly"/>
    <property type="evidence" value="ECO:0007669"/>
    <property type="project" value="UniProtKB-KW"/>
</dbReference>
<dbReference type="GO" id="GO:0043093">
    <property type="term" value="P:FtsZ-dependent cytokinesis"/>
    <property type="evidence" value="ECO:0007669"/>
    <property type="project" value="TreeGrafter"/>
</dbReference>
<dbReference type="GO" id="GO:0000921">
    <property type="term" value="P:septin ring assembly"/>
    <property type="evidence" value="ECO:0007669"/>
    <property type="project" value="TreeGrafter"/>
</dbReference>
<dbReference type="Gene3D" id="6.10.250.790">
    <property type="match status" value="1"/>
</dbReference>
<dbReference type="HAMAP" id="MF_02013">
    <property type="entry name" value="ZapA_type2"/>
    <property type="match status" value="1"/>
</dbReference>
<dbReference type="InterPro" id="IPR053712">
    <property type="entry name" value="Bac_CellDiv_Activator"/>
</dbReference>
<dbReference type="InterPro" id="IPR007838">
    <property type="entry name" value="Cell_div_ZapA-like"/>
</dbReference>
<dbReference type="InterPro" id="IPR036192">
    <property type="entry name" value="Cell_div_ZapA-like_sf"/>
</dbReference>
<dbReference type="InterPro" id="IPR023688">
    <property type="entry name" value="Cell_div_ZapA_firmicutes"/>
</dbReference>
<dbReference type="NCBIfam" id="NF010724">
    <property type="entry name" value="PRK14126.1"/>
    <property type="match status" value="1"/>
</dbReference>
<dbReference type="PANTHER" id="PTHR34981">
    <property type="entry name" value="CELL DIVISION PROTEIN ZAPA"/>
    <property type="match status" value="1"/>
</dbReference>
<dbReference type="PANTHER" id="PTHR34981:SF1">
    <property type="entry name" value="CELL DIVISION PROTEIN ZAPA"/>
    <property type="match status" value="1"/>
</dbReference>
<dbReference type="Pfam" id="PF05164">
    <property type="entry name" value="ZapA"/>
    <property type="match status" value="1"/>
</dbReference>
<dbReference type="SUPFAM" id="SSF102829">
    <property type="entry name" value="Cell division protein ZapA-like"/>
    <property type="match status" value="1"/>
</dbReference>
<organism>
    <name type="scientific">Geobacillus kaustophilus (strain HTA426)</name>
    <dbReference type="NCBI Taxonomy" id="235909"/>
    <lineage>
        <taxon>Bacteria</taxon>
        <taxon>Bacillati</taxon>
        <taxon>Bacillota</taxon>
        <taxon>Bacilli</taxon>
        <taxon>Bacillales</taxon>
        <taxon>Anoxybacillaceae</taxon>
        <taxon>Geobacillus</taxon>
        <taxon>Geobacillus thermoleovorans group</taxon>
    </lineage>
</organism>
<feature type="chain" id="PRO_0000345688" description="Cell division protein ZapA">
    <location>
        <begin position="1"/>
        <end position="91"/>
    </location>
</feature>
<feature type="coiled-coil region" evidence="1">
    <location>
        <begin position="58"/>
        <end position="91"/>
    </location>
</feature>
<name>ZAPA_GEOKA</name>
<protein>
    <recommendedName>
        <fullName evidence="1">Cell division protein ZapA</fullName>
    </recommendedName>
    <alternativeName>
        <fullName evidence="1">Z ring-associated protein ZapA</fullName>
    </alternativeName>
</protein>
<accession>Q5KWF5</accession>
<keyword id="KW-0131">Cell cycle</keyword>
<keyword id="KW-0132">Cell division</keyword>
<keyword id="KW-0175">Coiled coil</keyword>
<keyword id="KW-0963">Cytoplasm</keyword>
<keyword id="KW-1185">Reference proteome</keyword>
<keyword id="KW-0717">Septation</keyword>
<comment type="function">
    <text evidence="1">Activator of cell division through the inhibition of FtsZ GTPase activity, therefore promoting FtsZ assembly into bundles of protofilaments necessary for the formation of the division Z ring. It is recruited early at mid-cell but it is not essential for cell division.</text>
</comment>
<comment type="subunit">
    <text evidence="1">Homodimer. Interacts with FtsZ.</text>
</comment>
<comment type="subcellular location">
    <subcellularLocation>
        <location evidence="1">Cytoplasm</location>
    </subcellularLocation>
    <text evidence="1">Localizes at mid-cell. In sporulating cells, localizes near the cell poles.</text>
</comment>
<comment type="similarity">
    <text evidence="1">Belongs to the ZapA family. Type 2 subfamily.</text>
</comment>
<reference key="1">
    <citation type="journal article" date="2004" name="Nucleic Acids Res.">
        <title>Thermoadaptation trait revealed by the genome sequence of thermophilic Geobacillus kaustophilus.</title>
        <authorList>
            <person name="Takami H."/>
            <person name="Takaki Y."/>
            <person name="Chee G.-J."/>
            <person name="Nishi S."/>
            <person name="Shimamura S."/>
            <person name="Suzuki H."/>
            <person name="Matsui S."/>
            <person name="Uchiyama I."/>
        </authorList>
    </citation>
    <scope>NUCLEOTIDE SEQUENCE [LARGE SCALE GENOMIC DNA]</scope>
    <source>
        <strain>HTA426</strain>
    </source>
</reference>
<gene>
    <name evidence="1" type="primary">zapA</name>
    <name type="ordered locus">GK2696</name>
</gene>
<proteinExistence type="inferred from homology"/>
<evidence type="ECO:0000255" key="1">
    <source>
        <dbReference type="HAMAP-Rule" id="MF_02013"/>
    </source>
</evidence>
<sequence>MTGQPKTRVSVRIYGQDYTIVGAESPAHIRLVAAFVDDKMHEFSEKNPMLDVPKLAVLTAVNIASEYLKLKEEYNRLREQLKKEKDGERDD</sequence>